<comment type="function">
    <text evidence="1">ATP-dependent RNA helicase involved spliceosome assembly and in nuclear splicing. Catalyzes an ATP-dependent conformational change of U2 snRNP. Bridges U1 and U2 snRNPs and enables stable U2 snRNP association with intron RNA (By similarity).</text>
</comment>
<comment type="catalytic activity">
    <reaction>
        <text>ATP + H2O = ADP + phosphate + H(+)</text>
        <dbReference type="Rhea" id="RHEA:13065"/>
        <dbReference type="ChEBI" id="CHEBI:15377"/>
        <dbReference type="ChEBI" id="CHEBI:15378"/>
        <dbReference type="ChEBI" id="CHEBI:30616"/>
        <dbReference type="ChEBI" id="CHEBI:43474"/>
        <dbReference type="ChEBI" id="CHEBI:456216"/>
        <dbReference type="EC" id="3.6.4.13"/>
    </reaction>
</comment>
<comment type="subcellular location">
    <subcellularLocation>
        <location evidence="1">Nucleus</location>
    </subcellularLocation>
</comment>
<comment type="domain">
    <text>The Q motif is unique to and characteristic of the DEAD box family of RNA helicases and controls ATP binding and hydrolysis.</text>
</comment>
<comment type="similarity">
    <text evidence="5">Belongs to the DEAD box helicase family. DDX46/PRP5 subfamily.</text>
</comment>
<proteinExistence type="inferred from homology"/>
<protein>
    <recommendedName>
        <fullName>Pre-mRNA-processing ATP-dependent RNA helicase PRP5</fullName>
        <ecNumber>3.6.4.13</ecNumber>
    </recommendedName>
</protein>
<accession>A4RN46</accession>
<accession>G4MZC4</accession>
<organism>
    <name type="scientific">Pyricularia oryzae (strain 70-15 / ATCC MYA-4617 / FGSC 8958)</name>
    <name type="common">Rice blast fungus</name>
    <name type="synonym">Magnaporthe oryzae</name>
    <dbReference type="NCBI Taxonomy" id="242507"/>
    <lineage>
        <taxon>Eukaryota</taxon>
        <taxon>Fungi</taxon>
        <taxon>Dikarya</taxon>
        <taxon>Ascomycota</taxon>
        <taxon>Pezizomycotina</taxon>
        <taxon>Sordariomycetes</taxon>
        <taxon>Sordariomycetidae</taxon>
        <taxon>Magnaporthales</taxon>
        <taxon>Pyriculariaceae</taxon>
        <taxon>Pyricularia</taxon>
    </lineage>
</organism>
<gene>
    <name type="primary">PRP5</name>
    <name type="ORF">MGG_11403</name>
</gene>
<sequence length="1012" mass="108571">METEQQQRKDSVASAGSTRQLLAQMDVKATGSPSAMTSPGAASPATAQSAEDASPAVPYGGKFDPKAIAKKASARHQSPTVLGALQGRAAEKTAVSIAAPAKGSAASSLPQGKPISGFGFGKASNDDKVPTKRKLNLDDEEISKRKLAKLPDLSLETTDDAPYVNQDDDEDSDGDNFAGTEEEAAAAARAAHERREERILQQSMAMETDEANPAAEGQVNGSEPAVSSANAPEEAQAKPQTDSMDVDTKEDDDEVDPLDAFMADLTEPSFGPASKPVKTLSSAKVLPTPEAYFSDDDEFGASTKEGVDAKAIMAMAAKRKKKEIPTIDYSKLDIVPVRKNFWVEPYELSEMTEAEVAELRLELDGIKVSGKDVPKPVQKWSLCGLTRPILDVIAKLEYDKPTAIQMQALPVIMSGRDVVGVAKTGSGKTMAFLLPMFRHIKDQEPVKDNEGPIGLILTPTRELAVQIFRDCKPFLKTLGLRAVCAYGGPPIKDQIADLKRGAEIVVATTGRMIDLLAANQGRVVSLRRTTYIVLDEADRMFDMGFEPQVMKIFANVRPDRQTVLFSATMPKIMDALVKKVLKNPVEIEVGGKSVVASEITQIVEIRDEKSKFNRLLELLGELYKDDDDVRSLIFVERQEKADELLRELLRKGYGCMSLHGGKDQVDRDSTISDFKSGVCPVMIATSVAARGLDVKQLKLVVNYDAPNHLEDYVHRAGRTGRAGNTGTAVTFVTEEQENCAIGIAKALEQSGQPVPEKLIEMRKAFREKVKAGKAKDQSGFGGKGLEKLDKEREAARNRERKTHKAEGEEDDAEDDKKTTKNDEKTDKASSAILGAASAIVSRDAAKAEAEAKAAEGGSTPTAAATPAAGGKGGALDKAASAINEINARLARAGQLRPGQPIDNKGPDAGAFHATLEINDFPQKARWAVTNRTNVAKILEATGTSITTKGNYYPPGKDPPAGADPKLYILIEGDTELVVGNALSELTRLLKEGTMAAADAESRAPASGRYTIT</sequence>
<dbReference type="EC" id="3.6.4.13"/>
<dbReference type="EMBL" id="CM001232">
    <property type="protein sequence ID" value="EHA53679.1"/>
    <property type="molecule type" value="Genomic_DNA"/>
</dbReference>
<dbReference type="RefSeq" id="XP_003713486.1">
    <property type="nucleotide sequence ID" value="XM_003713438.1"/>
</dbReference>
<dbReference type="SMR" id="A4RN46"/>
<dbReference type="FunCoup" id="A4RN46">
    <property type="interactions" value="1022"/>
</dbReference>
<dbReference type="STRING" id="242507.A4RN46"/>
<dbReference type="EnsemblFungi" id="MGG_15532T0">
    <property type="protein sequence ID" value="MGG_15532T0"/>
    <property type="gene ID" value="MGG_15532"/>
</dbReference>
<dbReference type="KEGG" id="mgr:MGG_15532"/>
<dbReference type="VEuPathDB" id="FungiDB:MGG_15532"/>
<dbReference type="eggNOG" id="KOG0334">
    <property type="taxonomic scope" value="Eukaryota"/>
</dbReference>
<dbReference type="HOGENOM" id="CLU_003041_0_3_1"/>
<dbReference type="InParanoid" id="A4RN46"/>
<dbReference type="OMA" id="QLPMKKW"/>
<dbReference type="OrthoDB" id="196131at2759"/>
<dbReference type="Proteomes" id="UP000009058">
    <property type="component" value="Chromosome 2"/>
</dbReference>
<dbReference type="GO" id="GO:0005634">
    <property type="term" value="C:nucleus"/>
    <property type="evidence" value="ECO:0007669"/>
    <property type="project" value="UniProtKB-SubCell"/>
</dbReference>
<dbReference type="GO" id="GO:0005524">
    <property type="term" value="F:ATP binding"/>
    <property type="evidence" value="ECO:0007669"/>
    <property type="project" value="UniProtKB-KW"/>
</dbReference>
<dbReference type="GO" id="GO:0016887">
    <property type="term" value="F:ATP hydrolysis activity"/>
    <property type="evidence" value="ECO:0007669"/>
    <property type="project" value="RHEA"/>
</dbReference>
<dbReference type="GO" id="GO:0003676">
    <property type="term" value="F:nucleic acid binding"/>
    <property type="evidence" value="ECO:0007669"/>
    <property type="project" value="InterPro"/>
</dbReference>
<dbReference type="GO" id="GO:0003724">
    <property type="term" value="F:RNA helicase activity"/>
    <property type="evidence" value="ECO:0007669"/>
    <property type="project" value="UniProtKB-EC"/>
</dbReference>
<dbReference type="GO" id="GO:0006397">
    <property type="term" value="P:mRNA processing"/>
    <property type="evidence" value="ECO:0007669"/>
    <property type="project" value="UniProtKB-KW"/>
</dbReference>
<dbReference type="GO" id="GO:0008380">
    <property type="term" value="P:RNA splicing"/>
    <property type="evidence" value="ECO:0007669"/>
    <property type="project" value="UniProtKB-KW"/>
</dbReference>
<dbReference type="CDD" id="cd17953">
    <property type="entry name" value="DEADc_DDX46"/>
    <property type="match status" value="1"/>
</dbReference>
<dbReference type="CDD" id="cd22474">
    <property type="entry name" value="KH-I_PRP5_like"/>
    <property type="match status" value="1"/>
</dbReference>
<dbReference type="CDD" id="cd18787">
    <property type="entry name" value="SF2_C_DEAD"/>
    <property type="match status" value="1"/>
</dbReference>
<dbReference type="FunFam" id="3.40.50.300:FF:000079">
    <property type="entry name" value="probable ATP-dependent RNA helicase DDX17"/>
    <property type="match status" value="1"/>
</dbReference>
<dbReference type="Gene3D" id="3.40.50.300">
    <property type="entry name" value="P-loop containing nucleotide triphosphate hydrolases"/>
    <property type="match status" value="2"/>
</dbReference>
<dbReference type="InterPro" id="IPR011545">
    <property type="entry name" value="DEAD/DEAH_box_helicase_dom"/>
</dbReference>
<dbReference type="InterPro" id="IPR014001">
    <property type="entry name" value="Helicase_ATP-bd"/>
</dbReference>
<dbReference type="InterPro" id="IPR001650">
    <property type="entry name" value="Helicase_C-like"/>
</dbReference>
<dbReference type="InterPro" id="IPR027417">
    <property type="entry name" value="P-loop_NTPase"/>
</dbReference>
<dbReference type="InterPro" id="IPR056149">
    <property type="entry name" value="PRP5/DDX46/KHDC4_KH"/>
</dbReference>
<dbReference type="InterPro" id="IPR000629">
    <property type="entry name" value="RNA-helicase_DEAD-box_CS"/>
</dbReference>
<dbReference type="InterPro" id="IPR014014">
    <property type="entry name" value="RNA_helicase_DEAD_Q_motif"/>
</dbReference>
<dbReference type="PANTHER" id="PTHR47958">
    <property type="entry name" value="ATP-DEPENDENT RNA HELICASE DBP3"/>
    <property type="match status" value="1"/>
</dbReference>
<dbReference type="Pfam" id="PF00270">
    <property type="entry name" value="DEAD"/>
    <property type="match status" value="1"/>
</dbReference>
<dbReference type="Pfam" id="PF00271">
    <property type="entry name" value="Helicase_C"/>
    <property type="match status" value="1"/>
</dbReference>
<dbReference type="Pfam" id="PF23469">
    <property type="entry name" value="KH_12"/>
    <property type="match status" value="1"/>
</dbReference>
<dbReference type="SMART" id="SM00487">
    <property type="entry name" value="DEXDc"/>
    <property type="match status" value="1"/>
</dbReference>
<dbReference type="SMART" id="SM00490">
    <property type="entry name" value="HELICc"/>
    <property type="match status" value="1"/>
</dbReference>
<dbReference type="SUPFAM" id="SSF52540">
    <property type="entry name" value="P-loop containing nucleoside triphosphate hydrolases"/>
    <property type="match status" value="1"/>
</dbReference>
<dbReference type="PROSITE" id="PS00039">
    <property type="entry name" value="DEAD_ATP_HELICASE"/>
    <property type="match status" value="1"/>
</dbReference>
<dbReference type="PROSITE" id="PS51192">
    <property type="entry name" value="HELICASE_ATP_BIND_1"/>
    <property type="match status" value="1"/>
</dbReference>
<dbReference type="PROSITE" id="PS51194">
    <property type="entry name" value="HELICASE_CTER"/>
    <property type="match status" value="1"/>
</dbReference>
<dbReference type="PROSITE" id="PS51195">
    <property type="entry name" value="Q_MOTIF"/>
    <property type="match status" value="1"/>
</dbReference>
<keyword id="KW-0067">ATP-binding</keyword>
<keyword id="KW-0347">Helicase</keyword>
<keyword id="KW-0378">Hydrolase</keyword>
<keyword id="KW-0507">mRNA processing</keyword>
<keyword id="KW-0508">mRNA splicing</keyword>
<keyword id="KW-0547">Nucleotide-binding</keyword>
<keyword id="KW-0539">Nucleus</keyword>
<keyword id="KW-1185">Reference proteome</keyword>
<name>PRP5_PYRO7</name>
<feature type="chain" id="PRO_0000294649" description="Pre-mRNA-processing ATP-dependent RNA helicase PRP5">
    <location>
        <begin position="1"/>
        <end position="1012"/>
    </location>
</feature>
<feature type="domain" description="Helicase ATP-binding" evidence="2">
    <location>
        <begin position="409"/>
        <end position="587"/>
    </location>
</feature>
<feature type="domain" description="Helicase C-terminal" evidence="3">
    <location>
        <begin position="614"/>
        <end position="762"/>
    </location>
</feature>
<feature type="region of interest" description="Disordered" evidence="4">
    <location>
        <begin position="1"/>
        <end position="84"/>
    </location>
</feature>
<feature type="region of interest" description="Disordered" evidence="4">
    <location>
        <begin position="99"/>
        <end position="252"/>
    </location>
</feature>
<feature type="region of interest" description="Disordered" evidence="4">
    <location>
        <begin position="770"/>
        <end position="829"/>
    </location>
</feature>
<feature type="region of interest" description="Disordered" evidence="4">
    <location>
        <begin position="851"/>
        <end position="874"/>
    </location>
</feature>
<feature type="short sequence motif" description="Q motif">
    <location>
        <begin position="378"/>
        <end position="406"/>
    </location>
</feature>
<feature type="short sequence motif" description="DEAD box">
    <location>
        <begin position="535"/>
        <end position="538"/>
    </location>
</feature>
<feature type="compositionally biased region" description="Basic and acidic residues" evidence="4">
    <location>
        <begin position="1"/>
        <end position="11"/>
    </location>
</feature>
<feature type="compositionally biased region" description="Acidic residues" evidence="4">
    <location>
        <begin position="166"/>
        <end position="184"/>
    </location>
</feature>
<feature type="compositionally biased region" description="Basic and acidic residues" evidence="4">
    <location>
        <begin position="190"/>
        <end position="199"/>
    </location>
</feature>
<feature type="compositionally biased region" description="Polar residues" evidence="4">
    <location>
        <begin position="219"/>
        <end position="230"/>
    </location>
</feature>
<feature type="compositionally biased region" description="Basic and acidic residues" evidence="4">
    <location>
        <begin position="784"/>
        <end position="797"/>
    </location>
</feature>
<feature type="compositionally biased region" description="Basic and acidic residues" evidence="4">
    <location>
        <begin position="814"/>
        <end position="827"/>
    </location>
</feature>
<feature type="compositionally biased region" description="Low complexity" evidence="4">
    <location>
        <begin position="854"/>
        <end position="868"/>
    </location>
</feature>
<feature type="binding site" evidence="2">
    <location>
        <begin position="422"/>
        <end position="429"/>
    </location>
    <ligand>
        <name>ATP</name>
        <dbReference type="ChEBI" id="CHEBI:30616"/>
    </ligand>
</feature>
<evidence type="ECO:0000250" key="1"/>
<evidence type="ECO:0000255" key="2">
    <source>
        <dbReference type="PROSITE-ProRule" id="PRU00541"/>
    </source>
</evidence>
<evidence type="ECO:0000255" key="3">
    <source>
        <dbReference type="PROSITE-ProRule" id="PRU00542"/>
    </source>
</evidence>
<evidence type="ECO:0000256" key="4">
    <source>
        <dbReference type="SAM" id="MobiDB-lite"/>
    </source>
</evidence>
<evidence type="ECO:0000305" key="5"/>
<reference key="1">
    <citation type="journal article" date="2005" name="Nature">
        <title>The genome sequence of the rice blast fungus Magnaporthe grisea.</title>
        <authorList>
            <person name="Dean R.A."/>
            <person name="Talbot N.J."/>
            <person name="Ebbole D.J."/>
            <person name="Farman M.L."/>
            <person name="Mitchell T.K."/>
            <person name="Orbach M.J."/>
            <person name="Thon M.R."/>
            <person name="Kulkarni R."/>
            <person name="Xu J.-R."/>
            <person name="Pan H."/>
            <person name="Read N.D."/>
            <person name="Lee Y.-H."/>
            <person name="Carbone I."/>
            <person name="Brown D."/>
            <person name="Oh Y.Y."/>
            <person name="Donofrio N."/>
            <person name="Jeong J.S."/>
            <person name="Soanes D.M."/>
            <person name="Djonovic S."/>
            <person name="Kolomiets E."/>
            <person name="Rehmeyer C."/>
            <person name="Li W."/>
            <person name="Harding M."/>
            <person name="Kim S."/>
            <person name="Lebrun M.-H."/>
            <person name="Bohnert H."/>
            <person name="Coughlan S."/>
            <person name="Butler J."/>
            <person name="Calvo S.E."/>
            <person name="Ma L.-J."/>
            <person name="Nicol R."/>
            <person name="Purcell S."/>
            <person name="Nusbaum C."/>
            <person name="Galagan J.E."/>
            <person name="Birren B.W."/>
        </authorList>
    </citation>
    <scope>NUCLEOTIDE SEQUENCE [LARGE SCALE GENOMIC DNA]</scope>
    <source>
        <strain>70-15 / ATCC MYA-4617 / FGSC 8958</strain>
    </source>
</reference>